<keyword id="KW-0963">Cytoplasm</keyword>
<keyword id="KW-0903">Direct protein sequencing</keyword>
<keyword id="KW-0521">NADP</keyword>
<keyword id="KW-0539">Nucleus</keyword>
<keyword id="KW-1185">Reference proteome</keyword>
<protein>
    <recommendedName>
        <fullName evidence="2">NmrA-like family domain-containing protein 1</fullName>
    </recommendedName>
</protein>
<reference evidence="4" key="1">
    <citation type="submission" date="2008-12" db="UniProtKB">
        <authorList>
            <person name="Maurya D.K."/>
            <person name="Bhargava P."/>
        </authorList>
    </citation>
    <scope>PROTEIN SEQUENCE</scope>
    <source>
        <strain>Wistar</strain>
        <tissue>Cerebellum</tissue>
    </source>
</reference>
<name>NMRL1_RAT</name>
<evidence type="ECO:0000250" key="1"/>
<evidence type="ECO:0000250" key="2">
    <source>
        <dbReference type="UniProtKB" id="Q9HBL8"/>
    </source>
</evidence>
<evidence type="ECO:0000255" key="3"/>
<evidence type="ECO:0000305" key="4"/>
<sequence length="150" mass="16901">KLVVVFGATGAQGGSVARTLLEDGTFRVRVVTRNPEQKLLADLAKRLGLHYVVYSGLENIKKLAAGHFDGKGEVEEYFRKPEEYIGQNVGLSTCRTTPEEYEKLGFQGAQDLANMFRFYALKPDRNIDLTLRAQTLDQWLEQHKGDFAHL</sequence>
<accession>P86172</accession>
<dbReference type="SMR" id="P86172"/>
<dbReference type="FunCoup" id="P86172">
    <property type="interactions" value="260"/>
</dbReference>
<dbReference type="jPOST" id="P86172"/>
<dbReference type="UCSC" id="RGD:1311451">
    <property type="organism name" value="rat"/>
</dbReference>
<dbReference type="AGR" id="RGD:1311451"/>
<dbReference type="RGD" id="1311451">
    <property type="gene designation" value="Nmral1"/>
</dbReference>
<dbReference type="InParanoid" id="P86172"/>
<dbReference type="Proteomes" id="UP000002494">
    <property type="component" value="Unplaced"/>
</dbReference>
<dbReference type="GO" id="GO:0005634">
    <property type="term" value="C:nucleus"/>
    <property type="evidence" value="ECO:0007669"/>
    <property type="project" value="UniProtKB-SubCell"/>
</dbReference>
<dbReference type="GO" id="GO:0048471">
    <property type="term" value="C:perinuclear region of cytoplasm"/>
    <property type="evidence" value="ECO:0007669"/>
    <property type="project" value="UniProtKB-SubCell"/>
</dbReference>
<dbReference type="GO" id="GO:0042802">
    <property type="term" value="F:identical protein binding"/>
    <property type="evidence" value="ECO:0000266"/>
    <property type="project" value="RGD"/>
</dbReference>
<dbReference type="Gene3D" id="3.40.50.720">
    <property type="entry name" value="NAD(P)-binding Rossmann-like Domain"/>
    <property type="match status" value="3"/>
</dbReference>
<dbReference type="Gene3D" id="3.90.25.10">
    <property type="entry name" value="UDP-galactose 4-epimerase, domain 1"/>
    <property type="match status" value="1"/>
</dbReference>
<dbReference type="InterPro" id="IPR036291">
    <property type="entry name" value="NAD(P)-bd_dom_sf"/>
</dbReference>
<dbReference type="InterPro" id="IPR008030">
    <property type="entry name" value="NmrA-like"/>
</dbReference>
<dbReference type="InterPro" id="IPR051164">
    <property type="entry name" value="NmrA-like_oxidored"/>
</dbReference>
<dbReference type="PANTHER" id="PTHR42748">
    <property type="entry name" value="NITROGEN METABOLITE REPRESSION PROTEIN NMRA FAMILY MEMBER"/>
    <property type="match status" value="1"/>
</dbReference>
<dbReference type="PANTHER" id="PTHR42748:SF16">
    <property type="entry name" value="NMRA-LIKE FAMILY DOMAIN-CONTAINING PROTEIN 1"/>
    <property type="match status" value="1"/>
</dbReference>
<dbReference type="Pfam" id="PF05368">
    <property type="entry name" value="NmrA"/>
    <property type="match status" value="1"/>
</dbReference>
<dbReference type="SUPFAM" id="SSF51735">
    <property type="entry name" value="NAD(P)-binding Rossmann-fold domains"/>
    <property type="match status" value="1"/>
</dbReference>
<comment type="function">
    <text evidence="1">Redox sensor protein. Undergoes restructuring and subcellular redistribution in response to changes in intracellular NADPH/NADP(+) levels. At low NADPH concentrations the protein is found mainly as a monomer, and binds argininosuccinate synthase (ASS1), the enzyme involved in nitric oxide synthesis. Association with ASS1 impairs its activity and reduces the production of nitric oxide, which subsecuently prevents apoptosis. Under normal NADPH concentrations, the protein is found as a dimer and hides the binding site for ASS1. The homodimer binds one molecule of NADPH. Has higher affinity for NADPH than for NADP(+). Binding to NADPH is necessary to form a stable dimer (By similarity).</text>
</comment>
<comment type="subunit">
    <text evidence="1">Homodimer. Interacts with ASS1. Interaction is enhanced by low NADPH/NADP(+) ratios, which results in inhibition of ASS1 activity (By similarity).</text>
</comment>
<comment type="subcellular location">
    <subcellularLocation>
        <location>Cytoplasm</location>
    </subcellularLocation>
    <subcellularLocation>
        <location>Cytoplasm</location>
        <location>Perinuclear region</location>
    </subcellularLocation>
    <subcellularLocation>
        <location>Nucleus</location>
    </subcellularLocation>
    <text evidence="1">Under normal redox growth conditions localizes in the cytoplasm and perinuclear region. Nuclear localization is promoted by increased intracellular nitric oxide and reduced NADPH/NADP(+) ratios (By similarity).</text>
</comment>
<comment type="similarity">
    <text evidence="3">Belongs to the NmrA-type oxidoreductase family.</text>
</comment>
<comment type="caution">
    <text evidence="4">Lacks the conserved Tyr residue in the active site triad of Ser-Tyr-Lys necessary for dehydrogenase activity, suggesting that it has no oxidoreductase activity.</text>
</comment>
<organism>
    <name type="scientific">Rattus norvegicus</name>
    <name type="common">Rat</name>
    <dbReference type="NCBI Taxonomy" id="10116"/>
    <lineage>
        <taxon>Eukaryota</taxon>
        <taxon>Metazoa</taxon>
        <taxon>Chordata</taxon>
        <taxon>Craniata</taxon>
        <taxon>Vertebrata</taxon>
        <taxon>Euteleostomi</taxon>
        <taxon>Mammalia</taxon>
        <taxon>Eutheria</taxon>
        <taxon>Euarchontoglires</taxon>
        <taxon>Glires</taxon>
        <taxon>Rodentia</taxon>
        <taxon>Myomorpha</taxon>
        <taxon>Muroidea</taxon>
        <taxon>Muridae</taxon>
        <taxon>Murinae</taxon>
        <taxon>Rattus</taxon>
    </lineage>
</organism>
<proteinExistence type="evidence at protein level"/>
<feature type="chain" id="PRO_0000365638" description="NmrA-like family domain-containing protein 1">
    <location>
        <begin position="1" status="less than"/>
        <end position="150" status="greater than"/>
    </location>
</feature>
<feature type="binding site" evidence="1">
    <location>
        <begin position="7"/>
        <end position="12"/>
    </location>
    <ligand>
        <name>NADP(+)</name>
        <dbReference type="ChEBI" id="CHEBI:58349"/>
    </ligand>
</feature>
<feature type="binding site" evidence="1">
    <location>
        <begin position="33"/>
        <end position="37"/>
    </location>
    <ligand>
        <name>NADP(+)</name>
        <dbReference type="ChEBI" id="CHEBI:58349"/>
    </ligand>
</feature>
<feature type="binding site" evidence="1">
    <location>
        <position position="71"/>
    </location>
    <ligand>
        <name>NADP(+)</name>
        <dbReference type="ChEBI" id="CHEBI:58349"/>
    </ligand>
</feature>
<feature type="non-consecutive residues" evidence="4">
    <location>
        <begin position="38"/>
        <end position="39"/>
    </location>
</feature>
<feature type="non-consecutive residues" evidence="4">
    <location>
        <begin position="62"/>
        <end position="63"/>
    </location>
</feature>
<feature type="non-consecutive residues" evidence="4">
    <location>
        <begin position="79"/>
        <end position="80"/>
    </location>
</feature>
<feature type="non-consecutive residues" evidence="4">
    <location>
        <begin position="95"/>
        <end position="96"/>
    </location>
</feature>
<feature type="non-consecutive residues" evidence="4">
    <location>
        <begin position="132"/>
        <end position="133"/>
    </location>
</feature>
<feature type="non-terminal residue">
    <location>
        <position position="1"/>
    </location>
</feature>
<feature type="non-terminal residue">
    <location>
        <position position="150"/>
    </location>
</feature>
<gene>
    <name evidence="2" type="primary">Nmral1</name>
</gene>